<protein>
    <recommendedName>
        <fullName evidence="1">Large ribosomal subunit protein eL43</fullName>
    </recommendedName>
    <alternativeName>
        <fullName>60S ribosomal protein L43</fullName>
    </alternativeName>
</protein>
<evidence type="ECO:0000305" key="1"/>
<organism>
    <name type="scientific">Eremothecium gossypii (strain ATCC 10895 / CBS 109.51 / FGSC 9923 / NRRL Y-1056)</name>
    <name type="common">Yeast</name>
    <name type="synonym">Ashbya gossypii</name>
    <dbReference type="NCBI Taxonomy" id="284811"/>
    <lineage>
        <taxon>Eukaryota</taxon>
        <taxon>Fungi</taxon>
        <taxon>Dikarya</taxon>
        <taxon>Ascomycota</taxon>
        <taxon>Saccharomycotina</taxon>
        <taxon>Saccharomycetes</taxon>
        <taxon>Saccharomycetales</taxon>
        <taxon>Saccharomycetaceae</taxon>
        <taxon>Eremothecium</taxon>
    </lineage>
</organism>
<feature type="chain" id="PRO_0000139834" description="Large ribosomal subunit protein eL43">
    <location>
        <begin position="1"/>
        <end position="92"/>
    </location>
</feature>
<feature type="zinc finger region" description="C4-type">
    <location>
        <begin position="39"/>
        <end position="60"/>
    </location>
</feature>
<sequence length="92" mass="10064">MAKRTKKVGITGKYGVRYGSSLRRQVKKLEVQQHARYDCSFCGKKAVKRGAAGIWNCSSCKKTVAGGAYTFSTAAAATVRSTIRRLREMAEA</sequence>
<name>RL43_EREGS</name>
<keyword id="KW-0479">Metal-binding</keyword>
<keyword id="KW-1185">Reference proteome</keyword>
<keyword id="KW-0687">Ribonucleoprotein</keyword>
<keyword id="KW-0689">Ribosomal protein</keyword>
<keyword id="KW-0862">Zinc</keyword>
<keyword id="KW-0863">Zinc-finger</keyword>
<accession>Q751L1</accession>
<gene>
    <name type="primary">RPL43</name>
    <name type="ordered locus">AGL310C</name>
</gene>
<comment type="similarity">
    <text evidence="1">Belongs to the eukaryotic ribosomal protein eL43 family.</text>
</comment>
<dbReference type="EMBL" id="AE016820">
    <property type="protein sequence ID" value="AAS54181.1"/>
    <property type="molecule type" value="Genomic_DNA"/>
</dbReference>
<dbReference type="RefSeq" id="NP_986357.1">
    <property type="nucleotide sequence ID" value="NM_211419.1"/>
</dbReference>
<dbReference type="SMR" id="Q751L1"/>
<dbReference type="FunCoup" id="Q751L1">
    <property type="interactions" value="1100"/>
</dbReference>
<dbReference type="STRING" id="284811.Q751L1"/>
<dbReference type="EnsemblFungi" id="AAS54181">
    <property type="protein sequence ID" value="AAS54181"/>
    <property type="gene ID" value="AGOS_AGL310C"/>
</dbReference>
<dbReference type="GeneID" id="4622650"/>
<dbReference type="KEGG" id="ago:AGOS_AGL310C"/>
<dbReference type="eggNOG" id="KOG0402">
    <property type="taxonomic scope" value="Eukaryota"/>
</dbReference>
<dbReference type="HOGENOM" id="CLU_141199_1_0_1"/>
<dbReference type="InParanoid" id="Q751L1"/>
<dbReference type="OMA" id="GPRYGRK"/>
<dbReference type="OrthoDB" id="10258345at2759"/>
<dbReference type="Proteomes" id="UP000000591">
    <property type="component" value="Chromosome VII"/>
</dbReference>
<dbReference type="GO" id="GO:0022625">
    <property type="term" value="C:cytosolic large ribosomal subunit"/>
    <property type="evidence" value="ECO:0000318"/>
    <property type="project" value="GO_Central"/>
</dbReference>
<dbReference type="GO" id="GO:0003735">
    <property type="term" value="F:structural constituent of ribosome"/>
    <property type="evidence" value="ECO:0007669"/>
    <property type="project" value="InterPro"/>
</dbReference>
<dbReference type="GO" id="GO:0008270">
    <property type="term" value="F:zinc ion binding"/>
    <property type="evidence" value="ECO:0007669"/>
    <property type="project" value="UniProtKB-KW"/>
</dbReference>
<dbReference type="GO" id="GO:0006412">
    <property type="term" value="P:translation"/>
    <property type="evidence" value="ECO:0007669"/>
    <property type="project" value="InterPro"/>
</dbReference>
<dbReference type="FunFam" id="2.20.25.30:FF:000002">
    <property type="entry name" value="60S ribosomal protein L37a"/>
    <property type="match status" value="1"/>
</dbReference>
<dbReference type="Gene3D" id="2.20.25.30">
    <property type="match status" value="1"/>
</dbReference>
<dbReference type="HAMAP" id="MF_00327">
    <property type="entry name" value="Ribosomal_eL43"/>
    <property type="match status" value="1"/>
</dbReference>
<dbReference type="InterPro" id="IPR011331">
    <property type="entry name" value="Ribosomal_eL37/eL43"/>
</dbReference>
<dbReference type="InterPro" id="IPR002674">
    <property type="entry name" value="Ribosomal_eL43"/>
</dbReference>
<dbReference type="InterPro" id="IPR050522">
    <property type="entry name" value="Ribosomal_protein_eL43"/>
</dbReference>
<dbReference type="InterPro" id="IPR011332">
    <property type="entry name" value="Ribosomal_zn-bd"/>
</dbReference>
<dbReference type="NCBIfam" id="TIGR00280">
    <property type="entry name" value="eL43_euk_arch"/>
    <property type="match status" value="1"/>
</dbReference>
<dbReference type="NCBIfam" id="NF003058">
    <property type="entry name" value="PRK03976.1"/>
    <property type="match status" value="1"/>
</dbReference>
<dbReference type="PANTHER" id="PTHR48129">
    <property type="entry name" value="60S RIBOSOMAL PROTEIN L37A"/>
    <property type="match status" value="1"/>
</dbReference>
<dbReference type="PANTHER" id="PTHR48129:SF1">
    <property type="entry name" value="LARGE RIBOSOMAL SUBUNIT PROTEIN EL43"/>
    <property type="match status" value="1"/>
</dbReference>
<dbReference type="Pfam" id="PF01780">
    <property type="entry name" value="Ribosomal_L37ae"/>
    <property type="match status" value="1"/>
</dbReference>
<dbReference type="SUPFAM" id="SSF57829">
    <property type="entry name" value="Zn-binding ribosomal proteins"/>
    <property type="match status" value="1"/>
</dbReference>
<reference key="1">
    <citation type="journal article" date="2004" name="Science">
        <title>The Ashbya gossypii genome as a tool for mapping the ancient Saccharomyces cerevisiae genome.</title>
        <authorList>
            <person name="Dietrich F.S."/>
            <person name="Voegeli S."/>
            <person name="Brachat S."/>
            <person name="Lerch A."/>
            <person name="Gates K."/>
            <person name="Steiner S."/>
            <person name="Mohr C."/>
            <person name="Poehlmann R."/>
            <person name="Luedi P."/>
            <person name="Choi S."/>
            <person name="Wing R.A."/>
            <person name="Flavier A."/>
            <person name="Gaffney T.D."/>
            <person name="Philippsen P."/>
        </authorList>
    </citation>
    <scope>NUCLEOTIDE SEQUENCE [LARGE SCALE GENOMIC DNA]</scope>
    <source>
        <strain>ATCC 10895 / CBS 109.51 / FGSC 9923 / NRRL Y-1056</strain>
    </source>
</reference>
<reference key="2">
    <citation type="journal article" date="2013" name="G3 (Bethesda)">
        <title>Genomes of Ashbya fungi isolated from insects reveal four mating-type loci, numerous translocations, lack of transposons, and distinct gene duplications.</title>
        <authorList>
            <person name="Dietrich F.S."/>
            <person name="Voegeli S."/>
            <person name="Kuo S."/>
            <person name="Philippsen P."/>
        </authorList>
    </citation>
    <scope>GENOME REANNOTATION</scope>
    <source>
        <strain>ATCC 10895 / CBS 109.51 / FGSC 9923 / NRRL Y-1056</strain>
    </source>
</reference>
<proteinExistence type="inferred from homology"/>